<protein>
    <recommendedName>
        <fullName evidence="1">ATP-dependent Clp protease ATP-binding subunit ClpX</fullName>
    </recommendedName>
</protein>
<accession>B4T9E4</accession>
<proteinExistence type="inferred from homology"/>
<feature type="chain" id="PRO_1000097997" description="ATP-dependent Clp protease ATP-binding subunit ClpX">
    <location>
        <begin position="1"/>
        <end position="423"/>
    </location>
</feature>
<feature type="domain" description="ClpX-type ZB" evidence="2">
    <location>
        <begin position="2"/>
        <end position="56"/>
    </location>
</feature>
<feature type="binding site" evidence="2">
    <location>
        <position position="15"/>
    </location>
    <ligand>
        <name>Zn(2+)</name>
        <dbReference type="ChEBI" id="CHEBI:29105"/>
    </ligand>
</feature>
<feature type="binding site" evidence="2">
    <location>
        <position position="18"/>
    </location>
    <ligand>
        <name>Zn(2+)</name>
        <dbReference type="ChEBI" id="CHEBI:29105"/>
    </ligand>
</feature>
<feature type="binding site" evidence="2">
    <location>
        <position position="37"/>
    </location>
    <ligand>
        <name>Zn(2+)</name>
        <dbReference type="ChEBI" id="CHEBI:29105"/>
    </ligand>
</feature>
<feature type="binding site" evidence="2">
    <location>
        <position position="40"/>
    </location>
    <ligand>
        <name>Zn(2+)</name>
        <dbReference type="ChEBI" id="CHEBI:29105"/>
    </ligand>
</feature>
<feature type="binding site" evidence="1">
    <location>
        <begin position="120"/>
        <end position="127"/>
    </location>
    <ligand>
        <name>ATP</name>
        <dbReference type="ChEBI" id="CHEBI:30616"/>
    </ligand>
</feature>
<comment type="function">
    <text evidence="1">ATP-dependent specificity component of the Clp protease. It directs the protease to specific substrates. Can perform chaperone functions in the absence of ClpP.</text>
</comment>
<comment type="subunit">
    <text evidence="1">Component of the ClpX-ClpP complex. Forms a hexameric ring that, in the presence of ATP, binds to fourteen ClpP subunits assembled into a disk-like structure with a central cavity, resembling the structure of eukaryotic proteasomes.</text>
</comment>
<comment type="similarity">
    <text evidence="1">Belongs to the ClpX chaperone family.</text>
</comment>
<evidence type="ECO:0000255" key="1">
    <source>
        <dbReference type="HAMAP-Rule" id="MF_00175"/>
    </source>
</evidence>
<evidence type="ECO:0000255" key="2">
    <source>
        <dbReference type="PROSITE-ProRule" id="PRU01250"/>
    </source>
</evidence>
<reference key="1">
    <citation type="journal article" date="2011" name="J. Bacteriol.">
        <title>Comparative genomics of 28 Salmonella enterica isolates: evidence for CRISPR-mediated adaptive sublineage evolution.</title>
        <authorList>
            <person name="Fricke W.F."/>
            <person name="Mammel M.K."/>
            <person name="McDermott P.F."/>
            <person name="Tartera C."/>
            <person name="White D.G."/>
            <person name="Leclerc J.E."/>
            <person name="Ravel J."/>
            <person name="Cebula T.A."/>
        </authorList>
    </citation>
    <scope>NUCLEOTIDE SEQUENCE [LARGE SCALE GENOMIC DNA]</scope>
    <source>
        <strain>SL476</strain>
    </source>
</reference>
<gene>
    <name evidence="1" type="primary">clpX</name>
    <name type="ordered locus">SeHA_C0552</name>
</gene>
<dbReference type="EMBL" id="CP001120">
    <property type="protein sequence ID" value="ACF70005.1"/>
    <property type="molecule type" value="Genomic_DNA"/>
</dbReference>
<dbReference type="RefSeq" id="WP_000130314.1">
    <property type="nucleotide sequence ID" value="NC_011083.1"/>
</dbReference>
<dbReference type="SMR" id="B4T9E4"/>
<dbReference type="KEGG" id="seh:SeHA_C0552"/>
<dbReference type="HOGENOM" id="CLU_014218_8_2_6"/>
<dbReference type="Proteomes" id="UP000001866">
    <property type="component" value="Chromosome"/>
</dbReference>
<dbReference type="GO" id="GO:0009376">
    <property type="term" value="C:HslUV protease complex"/>
    <property type="evidence" value="ECO:0007669"/>
    <property type="project" value="TreeGrafter"/>
</dbReference>
<dbReference type="GO" id="GO:0005524">
    <property type="term" value="F:ATP binding"/>
    <property type="evidence" value="ECO:0007669"/>
    <property type="project" value="UniProtKB-UniRule"/>
</dbReference>
<dbReference type="GO" id="GO:0016887">
    <property type="term" value="F:ATP hydrolysis activity"/>
    <property type="evidence" value="ECO:0007669"/>
    <property type="project" value="InterPro"/>
</dbReference>
<dbReference type="GO" id="GO:0140662">
    <property type="term" value="F:ATP-dependent protein folding chaperone"/>
    <property type="evidence" value="ECO:0007669"/>
    <property type="project" value="InterPro"/>
</dbReference>
<dbReference type="GO" id="GO:0046983">
    <property type="term" value="F:protein dimerization activity"/>
    <property type="evidence" value="ECO:0007669"/>
    <property type="project" value="InterPro"/>
</dbReference>
<dbReference type="GO" id="GO:0051082">
    <property type="term" value="F:unfolded protein binding"/>
    <property type="evidence" value="ECO:0007669"/>
    <property type="project" value="UniProtKB-UniRule"/>
</dbReference>
<dbReference type="GO" id="GO:0008270">
    <property type="term" value="F:zinc ion binding"/>
    <property type="evidence" value="ECO:0007669"/>
    <property type="project" value="InterPro"/>
</dbReference>
<dbReference type="GO" id="GO:0051301">
    <property type="term" value="P:cell division"/>
    <property type="evidence" value="ECO:0007669"/>
    <property type="project" value="TreeGrafter"/>
</dbReference>
<dbReference type="GO" id="GO:0051603">
    <property type="term" value="P:proteolysis involved in protein catabolic process"/>
    <property type="evidence" value="ECO:0007669"/>
    <property type="project" value="TreeGrafter"/>
</dbReference>
<dbReference type="CDD" id="cd19497">
    <property type="entry name" value="RecA-like_ClpX"/>
    <property type="match status" value="1"/>
</dbReference>
<dbReference type="FunFam" id="1.10.8.60:FF:000002">
    <property type="entry name" value="ATP-dependent Clp protease ATP-binding subunit ClpX"/>
    <property type="match status" value="1"/>
</dbReference>
<dbReference type="FunFam" id="3.40.50.300:FF:000005">
    <property type="entry name" value="ATP-dependent Clp protease ATP-binding subunit ClpX"/>
    <property type="match status" value="1"/>
</dbReference>
<dbReference type="Gene3D" id="1.10.8.60">
    <property type="match status" value="1"/>
</dbReference>
<dbReference type="Gene3D" id="6.20.220.10">
    <property type="entry name" value="ClpX chaperone, C4-type zinc finger domain"/>
    <property type="match status" value="1"/>
</dbReference>
<dbReference type="Gene3D" id="3.40.50.300">
    <property type="entry name" value="P-loop containing nucleotide triphosphate hydrolases"/>
    <property type="match status" value="1"/>
</dbReference>
<dbReference type="HAMAP" id="MF_00175">
    <property type="entry name" value="ClpX"/>
    <property type="match status" value="1"/>
</dbReference>
<dbReference type="InterPro" id="IPR003593">
    <property type="entry name" value="AAA+_ATPase"/>
</dbReference>
<dbReference type="InterPro" id="IPR050052">
    <property type="entry name" value="ATP-dep_Clp_protease_ClpX"/>
</dbReference>
<dbReference type="InterPro" id="IPR003959">
    <property type="entry name" value="ATPase_AAA_core"/>
</dbReference>
<dbReference type="InterPro" id="IPR019489">
    <property type="entry name" value="Clp_ATPase_C"/>
</dbReference>
<dbReference type="InterPro" id="IPR004487">
    <property type="entry name" value="Clp_protease_ATP-bd_su_ClpX"/>
</dbReference>
<dbReference type="InterPro" id="IPR046425">
    <property type="entry name" value="ClpX_bact"/>
</dbReference>
<dbReference type="InterPro" id="IPR027417">
    <property type="entry name" value="P-loop_NTPase"/>
</dbReference>
<dbReference type="InterPro" id="IPR010603">
    <property type="entry name" value="Znf_CppX_C4"/>
</dbReference>
<dbReference type="InterPro" id="IPR038366">
    <property type="entry name" value="Znf_CppX_C4_sf"/>
</dbReference>
<dbReference type="NCBIfam" id="TIGR00382">
    <property type="entry name" value="clpX"/>
    <property type="match status" value="1"/>
</dbReference>
<dbReference type="NCBIfam" id="NF003745">
    <property type="entry name" value="PRK05342.1"/>
    <property type="match status" value="1"/>
</dbReference>
<dbReference type="PANTHER" id="PTHR48102:SF7">
    <property type="entry name" value="ATP-DEPENDENT CLP PROTEASE ATP-BINDING SUBUNIT CLPX-LIKE, MITOCHONDRIAL"/>
    <property type="match status" value="1"/>
</dbReference>
<dbReference type="PANTHER" id="PTHR48102">
    <property type="entry name" value="ATP-DEPENDENT CLP PROTEASE ATP-BINDING SUBUNIT CLPX-LIKE, MITOCHONDRIAL-RELATED"/>
    <property type="match status" value="1"/>
</dbReference>
<dbReference type="Pfam" id="PF07724">
    <property type="entry name" value="AAA_2"/>
    <property type="match status" value="1"/>
</dbReference>
<dbReference type="Pfam" id="PF10431">
    <property type="entry name" value="ClpB_D2-small"/>
    <property type="match status" value="1"/>
</dbReference>
<dbReference type="Pfam" id="PF06689">
    <property type="entry name" value="zf-C4_ClpX"/>
    <property type="match status" value="1"/>
</dbReference>
<dbReference type="SMART" id="SM00382">
    <property type="entry name" value="AAA"/>
    <property type="match status" value="1"/>
</dbReference>
<dbReference type="SMART" id="SM01086">
    <property type="entry name" value="ClpB_D2-small"/>
    <property type="match status" value="1"/>
</dbReference>
<dbReference type="SMART" id="SM00994">
    <property type="entry name" value="zf-C4_ClpX"/>
    <property type="match status" value="1"/>
</dbReference>
<dbReference type="SUPFAM" id="SSF57716">
    <property type="entry name" value="Glucocorticoid receptor-like (DNA-binding domain)"/>
    <property type="match status" value="1"/>
</dbReference>
<dbReference type="SUPFAM" id="SSF52540">
    <property type="entry name" value="P-loop containing nucleoside triphosphate hydrolases"/>
    <property type="match status" value="1"/>
</dbReference>
<dbReference type="PROSITE" id="PS51902">
    <property type="entry name" value="CLPX_ZB"/>
    <property type="match status" value="1"/>
</dbReference>
<keyword id="KW-0067">ATP-binding</keyword>
<keyword id="KW-0143">Chaperone</keyword>
<keyword id="KW-0479">Metal-binding</keyword>
<keyword id="KW-0547">Nucleotide-binding</keyword>
<keyword id="KW-0862">Zinc</keyword>
<name>CLPX_SALHS</name>
<sequence length="423" mass="46176">MTDKRKDGSGKLLYCSFCGKSQHEVRKLIAGPSVYICDECVDLCNDIIREEIKEVAPHRERSALPTPHEIRTHLDDYVIGQEQAKKVLAVAVYNHYKRLRNGDTSNGVELGKSNILLIGPTGSGKTLLAETLARLLDVPFTMADATTLTEAGYVGEDVENIIQKLLQKCDYDVQKAQRGIVYIDEIDKISRKSDNPSITRDVSGEGVQQALLKLIEGTVAAVPPQGGRKHPQQEFLQVDTSKILFICGGAFAGLDKVIANRVETGSGIGFGATVKAKSDKASEGELLSQVEPEDLIKFGLIPEFIGRLPVVATLNELSEEALIQILKEPKNALTKQYQALFNLEGVDLEFRDEALDAIARKAMARKTGARGLRSIVEAALLDTMYDLPSMEDVEKVVIDESVIAGQSKPLLIYGKPEAQASGE</sequence>
<organism>
    <name type="scientific">Salmonella heidelberg (strain SL476)</name>
    <dbReference type="NCBI Taxonomy" id="454169"/>
    <lineage>
        <taxon>Bacteria</taxon>
        <taxon>Pseudomonadati</taxon>
        <taxon>Pseudomonadota</taxon>
        <taxon>Gammaproteobacteria</taxon>
        <taxon>Enterobacterales</taxon>
        <taxon>Enterobacteriaceae</taxon>
        <taxon>Salmonella</taxon>
    </lineage>
</organism>